<feature type="chain" id="PRO_1000206551" description="Large ribosomal subunit protein bL9">
    <location>
        <begin position="1"/>
        <end position="147"/>
    </location>
</feature>
<gene>
    <name evidence="1" type="primary">rplI</name>
    <name type="ordered locus">GM21_1479</name>
</gene>
<keyword id="KW-0687">Ribonucleoprotein</keyword>
<keyword id="KW-0689">Ribosomal protein</keyword>
<keyword id="KW-0694">RNA-binding</keyword>
<keyword id="KW-0699">rRNA-binding</keyword>
<proteinExistence type="inferred from homology"/>
<organism>
    <name type="scientific">Geobacter sp. (strain M21)</name>
    <dbReference type="NCBI Taxonomy" id="443144"/>
    <lineage>
        <taxon>Bacteria</taxon>
        <taxon>Pseudomonadati</taxon>
        <taxon>Thermodesulfobacteriota</taxon>
        <taxon>Desulfuromonadia</taxon>
        <taxon>Geobacterales</taxon>
        <taxon>Geobacteraceae</taxon>
        <taxon>Geobacter</taxon>
    </lineage>
</organism>
<name>RL9_GEOSM</name>
<evidence type="ECO:0000255" key="1">
    <source>
        <dbReference type="HAMAP-Rule" id="MF_00503"/>
    </source>
</evidence>
<evidence type="ECO:0000305" key="2"/>
<accession>C6E506</accession>
<comment type="function">
    <text evidence="1">Binds to the 23S rRNA.</text>
</comment>
<comment type="similarity">
    <text evidence="1">Belongs to the bacterial ribosomal protein bL9 family.</text>
</comment>
<reference key="1">
    <citation type="submission" date="2009-07" db="EMBL/GenBank/DDBJ databases">
        <title>Complete sequence of Geobacter sp. M21.</title>
        <authorList>
            <consortium name="US DOE Joint Genome Institute"/>
            <person name="Lucas S."/>
            <person name="Copeland A."/>
            <person name="Lapidus A."/>
            <person name="Glavina del Rio T."/>
            <person name="Dalin E."/>
            <person name="Tice H."/>
            <person name="Bruce D."/>
            <person name="Goodwin L."/>
            <person name="Pitluck S."/>
            <person name="Saunders E."/>
            <person name="Brettin T."/>
            <person name="Detter J.C."/>
            <person name="Han C."/>
            <person name="Larimer F."/>
            <person name="Land M."/>
            <person name="Hauser L."/>
            <person name="Kyrpides N."/>
            <person name="Ovchinnikova G."/>
            <person name="Lovley D."/>
        </authorList>
    </citation>
    <scope>NUCLEOTIDE SEQUENCE [LARGE SCALE GENOMIC DNA]</scope>
    <source>
        <strain>M21</strain>
    </source>
</reference>
<dbReference type="EMBL" id="CP001661">
    <property type="protein sequence ID" value="ACT17535.1"/>
    <property type="molecule type" value="Genomic_DNA"/>
</dbReference>
<dbReference type="SMR" id="C6E506"/>
<dbReference type="STRING" id="443144.GM21_1479"/>
<dbReference type="KEGG" id="gem:GM21_1479"/>
<dbReference type="eggNOG" id="COG0359">
    <property type="taxonomic scope" value="Bacteria"/>
</dbReference>
<dbReference type="HOGENOM" id="CLU_078938_3_0_7"/>
<dbReference type="OrthoDB" id="9788336at2"/>
<dbReference type="GO" id="GO:1990904">
    <property type="term" value="C:ribonucleoprotein complex"/>
    <property type="evidence" value="ECO:0007669"/>
    <property type="project" value="UniProtKB-KW"/>
</dbReference>
<dbReference type="GO" id="GO:0005840">
    <property type="term" value="C:ribosome"/>
    <property type="evidence" value="ECO:0007669"/>
    <property type="project" value="UniProtKB-KW"/>
</dbReference>
<dbReference type="GO" id="GO:0019843">
    <property type="term" value="F:rRNA binding"/>
    <property type="evidence" value="ECO:0007669"/>
    <property type="project" value="UniProtKB-UniRule"/>
</dbReference>
<dbReference type="GO" id="GO:0003735">
    <property type="term" value="F:structural constituent of ribosome"/>
    <property type="evidence" value="ECO:0007669"/>
    <property type="project" value="InterPro"/>
</dbReference>
<dbReference type="GO" id="GO:0006412">
    <property type="term" value="P:translation"/>
    <property type="evidence" value="ECO:0007669"/>
    <property type="project" value="UniProtKB-UniRule"/>
</dbReference>
<dbReference type="FunFam" id="3.10.430.100:FF:000006">
    <property type="entry name" value="50S ribosomal protein L9"/>
    <property type="match status" value="1"/>
</dbReference>
<dbReference type="FunFam" id="3.40.5.10:FF:000003">
    <property type="entry name" value="50S ribosomal protein L9"/>
    <property type="match status" value="1"/>
</dbReference>
<dbReference type="Gene3D" id="3.10.430.100">
    <property type="entry name" value="Ribosomal protein L9, C-terminal domain"/>
    <property type="match status" value="1"/>
</dbReference>
<dbReference type="Gene3D" id="3.40.5.10">
    <property type="entry name" value="Ribosomal protein L9, N-terminal domain"/>
    <property type="match status" value="1"/>
</dbReference>
<dbReference type="HAMAP" id="MF_00503">
    <property type="entry name" value="Ribosomal_bL9"/>
    <property type="match status" value="1"/>
</dbReference>
<dbReference type="InterPro" id="IPR000244">
    <property type="entry name" value="Ribosomal_bL9"/>
</dbReference>
<dbReference type="InterPro" id="IPR009027">
    <property type="entry name" value="Ribosomal_bL9/RNase_H1_N"/>
</dbReference>
<dbReference type="InterPro" id="IPR020594">
    <property type="entry name" value="Ribosomal_bL9_bac/chp"/>
</dbReference>
<dbReference type="InterPro" id="IPR020069">
    <property type="entry name" value="Ribosomal_bL9_C"/>
</dbReference>
<dbReference type="InterPro" id="IPR036791">
    <property type="entry name" value="Ribosomal_bL9_C_sf"/>
</dbReference>
<dbReference type="InterPro" id="IPR020070">
    <property type="entry name" value="Ribosomal_bL9_N"/>
</dbReference>
<dbReference type="InterPro" id="IPR036935">
    <property type="entry name" value="Ribosomal_bL9_N_sf"/>
</dbReference>
<dbReference type="NCBIfam" id="TIGR00158">
    <property type="entry name" value="L9"/>
    <property type="match status" value="1"/>
</dbReference>
<dbReference type="PANTHER" id="PTHR21368">
    <property type="entry name" value="50S RIBOSOMAL PROTEIN L9"/>
    <property type="match status" value="1"/>
</dbReference>
<dbReference type="Pfam" id="PF03948">
    <property type="entry name" value="Ribosomal_L9_C"/>
    <property type="match status" value="1"/>
</dbReference>
<dbReference type="Pfam" id="PF01281">
    <property type="entry name" value="Ribosomal_L9_N"/>
    <property type="match status" value="1"/>
</dbReference>
<dbReference type="SUPFAM" id="SSF55658">
    <property type="entry name" value="L9 N-domain-like"/>
    <property type="match status" value="1"/>
</dbReference>
<dbReference type="SUPFAM" id="SSF55653">
    <property type="entry name" value="Ribosomal protein L9 C-domain"/>
    <property type="match status" value="1"/>
</dbReference>
<dbReference type="PROSITE" id="PS00651">
    <property type="entry name" value="RIBOSOMAL_L9"/>
    <property type="match status" value="1"/>
</dbReference>
<sequence length="147" mass="16000">MKLILKENVDNLGHIGDIVKVAPGYARNFLLPKGFAIEATEKNAKALEHAKRHLEYKKNKVLEAAKQLAAKIEGLSLSIAHQAGADDRLFGAVTNMELAEQLKANGIEVDRKRIVLAEPIKQLGDFTATVKIHPEVSATLKVAVTKA</sequence>
<protein>
    <recommendedName>
        <fullName evidence="1">Large ribosomal subunit protein bL9</fullName>
    </recommendedName>
    <alternativeName>
        <fullName evidence="2">50S ribosomal protein L9</fullName>
    </alternativeName>
</protein>